<sequence length="424" mass="47923">MKIKDWNRSLKVRLVGEFFMNTSFWMVFPFLAIYFAEEFGKGLAGMLLIISQIFSVAANLFGGYFADRFGRKRMLVSAAVAQGFAFLLFALANSPWLTSPELSFVAFTLAGMCGSLYWPASQAMIADVIPEKYRSDVFAVFYTTLNIAVVIGPLFGAVLFFSYRFELLLTVAIISVLLGLLLRFYTEETLSAEVLEKWKEGNATGWRGALLTQVKDYGIILKDRVFLLFVIAGILGAQTFMQLDLVIPVYLKETIDRQTILDFLGREWSVTGETSFGILLAENGLIVALLTVVITRWMTKFPEKWVFFFSALLFGLSMAIFPMTSWFWIFFVAMAVFTFAELMVVGLQQSFISKLAPESMRGQYFAAASLRYTIGRMIAPISIPMTAWFGFGWTFIILGSFAVLSGFVYLWMFHLYDKRTVANI</sequence>
<protein>
    <recommendedName>
        <fullName evidence="4">Na(+), Li(+), K(+)/H(+) antiporter</fullName>
    </recommendedName>
    <alternativeName>
        <fullName evidence="4">Major facilitator superfamily transporter MdrP</fullName>
        <shortName evidence="4">MFS transporter MdrP</shortName>
    </alternativeName>
    <alternativeName>
        <fullName evidence="4">Multidrug efflux pump MdrP</fullName>
    </alternativeName>
    <alternativeName>
        <fullName evidence="3">Na(+) (Li(+)/K(+))/H(+) antiporter</fullName>
    </alternativeName>
</protein>
<gene>
    <name evidence="3" type="primary">mdrP</name>
    <name evidence="6" type="ORF">BBI11_14530</name>
</gene>
<organism>
    <name type="scientific">Planococcus maritimus</name>
    <dbReference type="NCBI Taxonomy" id="192421"/>
    <lineage>
        <taxon>Bacteria</taxon>
        <taxon>Bacillati</taxon>
        <taxon>Bacillota</taxon>
        <taxon>Bacilli</taxon>
        <taxon>Bacillales</taxon>
        <taxon>Caryophanaceae</taxon>
        <taxon>Planococcus</taxon>
    </lineage>
</organism>
<comment type="function">
    <text evidence="2">Exhibits dual functions as a Na(+)(Li(+)/K(+))/H(+) antiporter and a multidrug efflux pump. Catalyzes the efflux of Na(+), Li(+) and K(+) in exchange for external protons. Shows a preference for Na(+), followed by K(+) and Li(+). Can also function as a multidrug efflux pump. Transports ethidium bromide and norfloxacin.</text>
</comment>
<comment type="activity regulation">
    <text evidence="2">Norfloxacin transport is inhibited by CCCP.</text>
</comment>
<comment type="biophysicochemical properties">
    <phDependence>
        <text evidence="2">Optimum pH is 9.0 for Na(+)/H(+) and Li(+)/H(+) antiport activities. Optimum pH is 8.5 for K(+)/H(+) antiport activity.</text>
    </phDependence>
</comment>
<comment type="subcellular location">
    <subcellularLocation>
        <location evidence="5">Cell membrane</location>
        <topology evidence="1">Multi-pass membrane protein</topology>
    </subcellularLocation>
</comment>
<comment type="similarity">
    <text evidence="4">Belongs to the major facilitator superfamily.</text>
</comment>
<name>MDRP_PLAMR</name>
<keyword id="KW-0046">Antibiotic resistance</keyword>
<keyword id="KW-0050">Antiport</keyword>
<keyword id="KW-1003">Cell membrane</keyword>
<keyword id="KW-0406">Ion transport</keyword>
<keyword id="KW-0472">Membrane</keyword>
<keyword id="KW-0630">Potassium</keyword>
<keyword id="KW-0633">Potassium transport</keyword>
<keyword id="KW-0915">Sodium</keyword>
<keyword id="KW-0739">Sodium transport</keyword>
<keyword id="KW-0812">Transmembrane</keyword>
<keyword id="KW-1133">Transmembrane helix</keyword>
<keyword id="KW-0813">Transport</keyword>
<evidence type="ECO:0000255" key="1"/>
<evidence type="ECO:0000269" key="2">
    <source>
    </source>
</evidence>
<evidence type="ECO:0000303" key="3">
    <source>
    </source>
</evidence>
<evidence type="ECO:0000305" key="4"/>
<evidence type="ECO:0000305" key="5">
    <source>
    </source>
</evidence>
<evidence type="ECO:0000312" key="6">
    <source>
        <dbReference type="EMBL" id="ANU18183.1"/>
    </source>
</evidence>
<proteinExistence type="evidence at protein level"/>
<reference key="1">
    <citation type="submission" date="2016-07" db="EMBL/GenBank/DDBJ databases">
        <authorList>
            <person name="See-Too W.S."/>
        </authorList>
    </citation>
    <scope>NUCLEOTIDE SEQUENCE [LARGE SCALE GENOMIC DNA]</scope>
    <source>
        <strain>DSM 17275 / CIP 108219 / JCM 11543 / TF-9</strain>
    </source>
</reference>
<reference key="2">
    <citation type="journal article" date="2018" name="Front. Microbiol.">
        <title>An uncharacterized major facilitator superfamily transporter from Planococcus maritimus exhibits dual functions as a Na+(Li+, K+)/H+ antiporter and a multidrug efflux pump.</title>
        <authorList>
            <person name="Abdel-Motaal H."/>
            <person name="Meng L."/>
            <person name="Zhang Z."/>
            <person name="Abdelazez A.H."/>
            <person name="Shao L."/>
            <person name="Xu T."/>
            <person name="Meng F."/>
            <person name="Abozaed S."/>
            <person name="Zhang R."/>
            <person name="Jiang J."/>
        </authorList>
    </citation>
    <scope>FUNCTION</scope>
    <scope>ACTIVITY REGULATION</scope>
    <scope>BIOPHYSICOCHEMICAL PROPERTIES</scope>
    <scope>SUBCELLULAR LOCATION</scope>
    <source>
        <strain>DSM 17275 / CIP 108219 / JCM 11543 / TF-9</strain>
    </source>
</reference>
<feature type="chain" id="PRO_0000446277" description="Na(+), Li(+), K(+)/H(+) antiporter">
    <location>
        <begin position="1"/>
        <end position="424"/>
    </location>
</feature>
<feature type="transmembrane region" description="Helical" evidence="1">
    <location>
        <begin position="15"/>
        <end position="35"/>
    </location>
</feature>
<feature type="transmembrane region" description="Helical" evidence="1">
    <location>
        <begin position="42"/>
        <end position="62"/>
    </location>
</feature>
<feature type="transmembrane region" description="Helical" evidence="1">
    <location>
        <begin position="74"/>
        <end position="94"/>
    </location>
</feature>
<feature type="transmembrane region" description="Helical" evidence="1">
    <location>
        <begin position="105"/>
        <end position="125"/>
    </location>
</feature>
<feature type="transmembrane region" description="Helical" evidence="1">
    <location>
        <begin position="141"/>
        <end position="161"/>
    </location>
</feature>
<feature type="transmembrane region" description="Helical" evidence="1">
    <location>
        <begin position="165"/>
        <end position="185"/>
    </location>
</feature>
<feature type="transmembrane region" description="Helical" evidence="1">
    <location>
        <begin position="227"/>
        <end position="247"/>
    </location>
</feature>
<feature type="transmembrane region" description="Helical" evidence="1">
    <location>
        <begin position="274"/>
        <end position="294"/>
    </location>
</feature>
<feature type="transmembrane region" description="Helical" evidence="1">
    <location>
        <begin position="305"/>
        <end position="325"/>
    </location>
</feature>
<feature type="transmembrane region" description="Helical" evidence="1">
    <location>
        <begin position="327"/>
        <end position="347"/>
    </location>
</feature>
<feature type="transmembrane region" description="Helical" evidence="1">
    <location>
        <begin position="367"/>
        <end position="389"/>
    </location>
</feature>
<feature type="transmembrane region" description="Helical" evidence="1">
    <location>
        <begin position="393"/>
        <end position="415"/>
    </location>
</feature>
<dbReference type="EMBL" id="CP016538">
    <property type="protein sequence ID" value="ANU18183.1"/>
    <property type="molecule type" value="Genomic_DNA"/>
</dbReference>
<dbReference type="RefSeq" id="WP_068464567.1">
    <property type="nucleotide sequence ID" value="NZ_CANLTX010000002.1"/>
</dbReference>
<dbReference type="SMR" id="A0A1C7E424"/>
<dbReference type="KEGG" id="pmat:BBI11_14530"/>
<dbReference type="OrthoDB" id="9793283at2"/>
<dbReference type="GO" id="GO:0005886">
    <property type="term" value="C:plasma membrane"/>
    <property type="evidence" value="ECO:0007669"/>
    <property type="project" value="UniProtKB-SubCell"/>
</dbReference>
<dbReference type="GO" id="GO:0015297">
    <property type="term" value="F:antiporter activity"/>
    <property type="evidence" value="ECO:0007669"/>
    <property type="project" value="UniProtKB-KW"/>
</dbReference>
<dbReference type="GO" id="GO:0006813">
    <property type="term" value="P:potassium ion transport"/>
    <property type="evidence" value="ECO:0007669"/>
    <property type="project" value="UniProtKB-KW"/>
</dbReference>
<dbReference type="GO" id="GO:0046677">
    <property type="term" value="P:response to antibiotic"/>
    <property type="evidence" value="ECO:0007669"/>
    <property type="project" value="UniProtKB-KW"/>
</dbReference>
<dbReference type="GO" id="GO:0006814">
    <property type="term" value="P:sodium ion transport"/>
    <property type="evidence" value="ECO:0007669"/>
    <property type="project" value="UniProtKB-KW"/>
</dbReference>
<dbReference type="CDD" id="cd17329">
    <property type="entry name" value="MFS_MdtH_MDR_like"/>
    <property type="match status" value="1"/>
</dbReference>
<dbReference type="Gene3D" id="1.20.1250.20">
    <property type="entry name" value="MFS general substrate transporter like domains"/>
    <property type="match status" value="1"/>
</dbReference>
<dbReference type="InterPro" id="IPR011701">
    <property type="entry name" value="MFS"/>
</dbReference>
<dbReference type="InterPro" id="IPR020846">
    <property type="entry name" value="MFS_dom"/>
</dbReference>
<dbReference type="InterPro" id="IPR036259">
    <property type="entry name" value="MFS_trans_sf"/>
</dbReference>
<dbReference type="InterPro" id="IPR050171">
    <property type="entry name" value="MFS_Transporters"/>
</dbReference>
<dbReference type="InterPro" id="IPR005829">
    <property type="entry name" value="Sugar_transporter_CS"/>
</dbReference>
<dbReference type="PANTHER" id="PTHR23517:SF3">
    <property type="entry name" value="INTEGRAL MEMBRANE TRANSPORT PROTEIN"/>
    <property type="match status" value="1"/>
</dbReference>
<dbReference type="PANTHER" id="PTHR23517">
    <property type="entry name" value="RESISTANCE PROTEIN MDTM, PUTATIVE-RELATED-RELATED"/>
    <property type="match status" value="1"/>
</dbReference>
<dbReference type="Pfam" id="PF07690">
    <property type="entry name" value="MFS_1"/>
    <property type="match status" value="2"/>
</dbReference>
<dbReference type="SUPFAM" id="SSF103473">
    <property type="entry name" value="MFS general substrate transporter"/>
    <property type="match status" value="1"/>
</dbReference>
<dbReference type="PROSITE" id="PS50850">
    <property type="entry name" value="MFS"/>
    <property type="match status" value="1"/>
</dbReference>
<accession>A0A1C7E424</accession>